<protein>
    <recommendedName>
        <fullName>Zinc finger protein 223</fullName>
    </recommendedName>
</protein>
<evidence type="ECO:0000255" key="1">
    <source>
        <dbReference type="PROSITE-ProRule" id="PRU00042"/>
    </source>
</evidence>
<evidence type="ECO:0000255" key="2">
    <source>
        <dbReference type="PROSITE-ProRule" id="PRU00119"/>
    </source>
</evidence>
<evidence type="ECO:0000269" key="3">
    <source>
    </source>
</evidence>
<evidence type="ECO:0000269" key="4">
    <source>
    </source>
</evidence>
<evidence type="ECO:0000269" key="5">
    <source>
    </source>
</evidence>
<evidence type="ECO:0000305" key="6"/>
<name>ZN223_HUMAN</name>
<feature type="chain" id="PRO_0000047464" description="Zinc finger protein 223">
    <location>
        <begin position="1"/>
        <end position="482"/>
    </location>
</feature>
<feature type="domain" description="KRAB" evidence="2">
    <location>
        <begin position="8"/>
        <end position="78"/>
    </location>
</feature>
<feature type="zinc finger region" description="C2H2-type 1" evidence="1">
    <location>
        <begin position="176"/>
        <end position="198"/>
    </location>
</feature>
<feature type="zinc finger region" description="C2H2-type 2" evidence="1">
    <location>
        <begin position="204"/>
        <end position="226"/>
    </location>
</feature>
<feature type="zinc finger region" description="C2H2-type 3" evidence="1">
    <location>
        <begin position="232"/>
        <end position="254"/>
    </location>
</feature>
<feature type="zinc finger region" description="C2H2-type 4" evidence="1">
    <location>
        <begin position="260"/>
        <end position="282"/>
    </location>
</feature>
<feature type="zinc finger region" description="C2H2-type 5" evidence="1">
    <location>
        <begin position="288"/>
        <end position="310"/>
    </location>
</feature>
<feature type="zinc finger region" description="C2H2-type 6; degenerate" evidence="1">
    <location>
        <begin position="316"/>
        <end position="338"/>
    </location>
</feature>
<feature type="zinc finger region" description="C2H2-type 7" evidence="1">
    <location>
        <begin position="344"/>
        <end position="366"/>
    </location>
</feature>
<feature type="zinc finger region" description="C2H2-type 8" evidence="1">
    <location>
        <begin position="372"/>
        <end position="394"/>
    </location>
</feature>
<feature type="zinc finger region" description="C2H2-type 9" evidence="1">
    <location>
        <begin position="400"/>
        <end position="422"/>
    </location>
</feature>
<feature type="zinc finger region" description="C2H2-type 10; degenerate" evidence="1">
    <location>
        <begin position="428"/>
        <end position="450"/>
    </location>
</feature>
<feature type="sequence variant" id="VAR_060424" description="In dbSNP:rs4130101.">
    <original>L</original>
    <variation>I</variation>
    <location>
        <position position="60"/>
    </location>
</feature>
<feature type="sequence variant" id="VAR_060425" description="In dbSNP:rs6509138." evidence="3 4 5">
    <original>L</original>
    <variation>I</variation>
    <location>
        <position position="138"/>
    </location>
</feature>
<feature type="sequence conflict" description="In Ref. 1; AAF04105." evidence="6" ref="1">
    <original>L</original>
    <variation>M</variation>
    <location>
        <position position="25"/>
    </location>
</feature>
<feature type="sequence conflict" description="In Ref. 1; AAF04105." evidence="6" ref="1">
    <original>C</original>
    <variation>S</variation>
    <location>
        <position position="153"/>
    </location>
</feature>
<feature type="sequence conflict" description="In Ref. 1; AAF04105." evidence="6" ref="1">
    <original>SV</original>
    <variation>GK</variation>
    <location>
        <begin position="294"/>
        <end position="295"/>
    </location>
</feature>
<feature type="sequence conflict" description="In Ref. 1; AAF04105." evidence="6" ref="1">
    <original>R</original>
    <variation>C</variation>
    <location>
        <position position="298"/>
    </location>
</feature>
<feature type="sequence conflict" description="In Ref. 1; AAF04105." evidence="6" ref="1">
    <original>V</original>
    <variation>M</variation>
    <location>
        <position position="308"/>
    </location>
</feature>
<feature type="sequence conflict" description="In Ref. 1; AAF04105." evidence="6" ref="1">
    <original>GKKPNSTGEYGK</original>
    <variation>AEKLYKSEKYGR</variation>
    <location>
        <begin position="312"/>
        <end position="323"/>
    </location>
</feature>
<feature type="sequence conflict" description="In Ref. 1; AAF04105." evidence="6" ref="1">
    <original>R</original>
    <variation>D</variation>
    <location>
        <position position="327"/>
    </location>
</feature>
<feature type="sequence conflict" description="In Ref. 1; AAF04105." evidence="6" ref="1">
    <original>C</original>
    <variation>H</variation>
    <location>
        <position position="332"/>
    </location>
</feature>
<feature type="sequence conflict" description="In Ref. 1; AAF04105." evidence="6" ref="1">
    <original>T</original>
    <variation>M</variation>
    <location>
        <position position="336"/>
    </location>
</feature>
<feature type="sequence conflict" description="In Ref. 1; AAF04105." evidence="6" ref="1">
    <original>TGE</original>
    <variation>MGQ</variation>
    <location>
        <begin position="339"/>
        <end position="341"/>
    </location>
</feature>
<feature type="sequence conflict" description="In Ref. 1; AAF04105." evidence="6" ref="1">
    <original>RR</original>
    <variation>KW</variation>
    <location>
        <begin position="354"/>
        <end position="355"/>
    </location>
</feature>
<feature type="sequence conflict" description="In Ref. 1; AAF04105." evidence="6" ref="1">
    <original>I</original>
    <variation>V</variation>
    <location>
        <position position="361"/>
    </location>
</feature>
<feature type="sequence conflict" description="In Ref. 1; AAF04105." evidence="6" ref="1">
    <original>DK</original>
    <variation>EE</variation>
    <location>
        <begin position="375"/>
        <end position="376"/>
    </location>
</feature>
<feature type="sequence conflict" description="In Ref. 1; AAF04105." evidence="6" ref="1">
    <original>S</original>
    <variation>G</variation>
    <location>
        <position position="380"/>
    </location>
</feature>
<feature type="sequence conflict" description="In Ref. 1; AAF04105." evidence="6" ref="1">
    <original>T</original>
    <variation>S</variation>
    <location>
        <position position="383"/>
    </location>
</feature>
<organism>
    <name type="scientific">Homo sapiens</name>
    <name type="common">Human</name>
    <dbReference type="NCBI Taxonomy" id="9606"/>
    <lineage>
        <taxon>Eukaryota</taxon>
        <taxon>Metazoa</taxon>
        <taxon>Chordata</taxon>
        <taxon>Craniata</taxon>
        <taxon>Vertebrata</taxon>
        <taxon>Euteleostomi</taxon>
        <taxon>Mammalia</taxon>
        <taxon>Eutheria</taxon>
        <taxon>Euarchontoglires</taxon>
        <taxon>Primates</taxon>
        <taxon>Haplorrhini</taxon>
        <taxon>Catarrhini</taxon>
        <taxon>Hominidae</taxon>
        <taxon>Homo</taxon>
    </lineage>
</organism>
<accession>Q9UK11</accession>
<accession>Q15736</accession>
<accession>Q8TBJ3</accession>
<accession>Q9HCA9</accession>
<comment type="function">
    <text>May be involved in transcriptional regulation.</text>
</comment>
<comment type="interaction">
    <interactant intactId="EBI-10322867">
        <id>Q9UK11</id>
    </interactant>
    <interactant intactId="EBI-10311131">
        <id>Q9NP86</id>
        <label>CABP5</label>
    </interactant>
    <organismsDiffer>false</organismsDiffer>
    <experiments>3</experiments>
</comment>
<comment type="interaction">
    <interactant intactId="EBI-10322867">
        <id>Q9UK11</id>
    </interactant>
    <interactant intactId="EBI-3866279">
        <id>Q9BWT7</id>
        <label>CARD10</label>
    </interactant>
    <organismsDiffer>false</organismsDiffer>
    <experiments>3</experiments>
</comment>
<comment type="interaction">
    <interactant intactId="EBI-10322867">
        <id>Q9UK11</id>
    </interactant>
    <interactant intactId="EBI-748961">
        <id>O95273</id>
        <label>CCNDBP1</label>
    </interactant>
    <organismsDiffer>false</organismsDiffer>
    <experiments>3</experiments>
</comment>
<comment type="interaction">
    <interactant intactId="EBI-10322867">
        <id>Q9UK11</id>
    </interactant>
    <interactant intactId="EBI-10172290">
        <id>P60409</id>
        <label>KRTAP10-7</label>
    </interactant>
    <organismsDiffer>false</organismsDiffer>
    <experiments>4</experiments>
</comment>
<comment type="interaction">
    <interactant intactId="EBI-10322867">
        <id>Q9UK11</id>
    </interactant>
    <interactant intactId="EBI-724076">
        <id>Q99750</id>
        <label>MDFI</label>
    </interactant>
    <organismsDiffer>false</organismsDiffer>
    <experiments>7</experiments>
</comment>
<comment type="interaction">
    <interactant intactId="EBI-10322867">
        <id>Q9UK11</id>
    </interactant>
    <interactant intactId="EBI-747993">
        <id>Q9NQZ6</id>
        <label>ZC4H2</label>
    </interactant>
    <organismsDiffer>false</organismsDiffer>
    <experiments>4</experiments>
</comment>
<comment type="subcellular location">
    <subcellularLocation>
        <location evidence="6">Nucleus</location>
    </subcellularLocation>
</comment>
<comment type="similarity">
    <text evidence="6">Belongs to the krueppel C2H2-type zinc-finger protein family.</text>
</comment>
<comment type="sequence caution" evidence="6">
    <conflict type="erroneous gene model prediction">
        <sequence resource="EMBL-CDS" id="AAB03531"/>
    </conflict>
</comment>
<keyword id="KW-0238">DNA-binding</keyword>
<keyword id="KW-0479">Metal-binding</keyword>
<keyword id="KW-0539">Nucleus</keyword>
<keyword id="KW-1267">Proteomics identification</keyword>
<keyword id="KW-1185">Reference proteome</keyword>
<keyword id="KW-0677">Repeat</keyword>
<keyword id="KW-0804">Transcription</keyword>
<keyword id="KW-0805">Transcription regulation</keyword>
<keyword id="KW-0862">Zinc</keyword>
<keyword id="KW-0863">Zinc-finger</keyword>
<sequence length="482" mass="55763">MTMSKEAVTFKDVAVVFTEEELGLLDLAQRKLYRDVMLENFRNLLSVGHQPFHRDTFHFLREEKFWMMDIATQREGNSGGKIQPEMKTFPEAGPHEGWSCQQIWEEIASDLTRPQDSTIKSSQFFEQGDAHSQVEEGLSIMHTGQKPSNCGKCKQSFSDMSIFDLPQQIRSAEKSHSCDECGKSFCYISALHIHQRVHLGEKLFKCDVCGKEFSQSLHLQTHQRVHTGEKPFKCEQCGRGFRCRSALTVHCKLHMGEKHYNCEACGRAFIHDFQLQKHQRIHTGEKPFKCEICSVSFRLRSSLNRHCVVHTGKKPNSTGEYGKGFIRRLDLCKHQTIHTGEKPYNCKECGKSFRRSSYLLIHQRVHTGEKPYKCDKCGKSYITKSGLDLHHRAHTGERPYNCDDCGKSFRQASSILNHKRLHCRKKPFKCEDCGKKLVYRSYRKDQQKNHSGENPSKCEDCGKRYKRRLNLDIILSLFLNDT</sequence>
<gene>
    <name type="primary">ZNF223</name>
</gene>
<dbReference type="EMBL" id="AF187989">
    <property type="protein sequence ID" value="AAF04105.1"/>
    <property type="molecule type" value="mRNA"/>
</dbReference>
<dbReference type="EMBL" id="AK292327">
    <property type="protein sequence ID" value="BAF85016.1"/>
    <property type="molecule type" value="mRNA"/>
</dbReference>
<dbReference type="EMBL" id="AC092072">
    <property type="status" value="NOT_ANNOTATED_CDS"/>
    <property type="molecule type" value="Genomic_DNA"/>
</dbReference>
<dbReference type="EMBL" id="BC022466">
    <property type="protein sequence ID" value="AAH22466.1"/>
    <property type="molecule type" value="mRNA"/>
</dbReference>
<dbReference type="EMBL" id="U46189">
    <property type="protein sequence ID" value="AAB03531.1"/>
    <property type="status" value="ALT_SEQ"/>
    <property type="molecule type" value="Genomic_DNA"/>
</dbReference>
<dbReference type="EMBL" id="AC084219">
    <property type="protein sequence ID" value="AAG23844.1"/>
    <property type="molecule type" value="Genomic_DNA"/>
</dbReference>
<dbReference type="CCDS" id="CCDS12635.1"/>
<dbReference type="RefSeq" id="NP_037493.3">
    <property type="nucleotide sequence ID" value="NM_013361.5"/>
</dbReference>
<dbReference type="RefSeq" id="XP_016882747.1">
    <property type="nucleotide sequence ID" value="XM_017027258.2"/>
</dbReference>
<dbReference type="RefSeq" id="XP_016882748.1">
    <property type="nucleotide sequence ID" value="XM_017027259.2"/>
</dbReference>
<dbReference type="SMR" id="Q9UK11"/>
<dbReference type="BioGRID" id="113549">
    <property type="interactions" value="34"/>
</dbReference>
<dbReference type="FunCoup" id="Q9UK11">
    <property type="interactions" value="49"/>
</dbReference>
<dbReference type="IntAct" id="Q9UK11">
    <property type="interactions" value="33"/>
</dbReference>
<dbReference type="STRING" id="9606.ENSP00000401947"/>
<dbReference type="iPTMnet" id="Q9UK11"/>
<dbReference type="PhosphoSitePlus" id="Q9UK11"/>
<dbReference type="BioMuta" id="ZNF223"/>
<dbReference type="DMDM" id="311033504"/>
<dbReference type="jPOST" id="Q9UK11"/>
<dbReference type="MassIVE" id="Q9UK11"/>
<dbReference type="PaxDb" id="9606-ENSP00000401947"/>
<dbReference type="PeptideAtlas" id="Q9UK11"/>
<dbReference type="ProteomicsDB" id="84702"/>
<dbReference type="Antibodypedia" id="17687">
    <property type="antibodies" value="70 antibodies from 18 providers"/>
</dbReference>
<dbReference type="DNASU" id="7766"/>
<dbReference type="Ensembl" id="ENST00000434772.8">
    <property type="protein sequence ID" value="ENSP00000401947.1"/>
    <property type="gene ID" value="ENSG00000178386.13"/>
</dbReference>
<dbReference type="GeneID" id="7766"/>
<dbReference type="KEGG" id="hsa:7766"/>
<dbReference type="MANE-Select" id="ENST00000434772.8">
    <property type="protein sequence ID" value="ENSP00000401947.1"/>
    <property type="RefSeq nucleotide sequence ID" value="NM_013361.6"/>
    <property type="RefSeq protein sequence ID" value="NP_037493.3"/>
</dbReference>
<dbReference type="UCSC" id="uc002oyf.2">
    <property type="organism name" value="human"/>
</dbReference>
<dbReference type="AGR" id="HGNC:13016"/>
<dbReference type="CTD" id="7766"/>
<dbReference type="DisGeNET" id="7766"/>
<dbReference type="GeneCards" id="ZNF223"/>
<dbReference type="HGNC" id="HGNC:13016">
    <property type="gene designation" value="ZNF223"/>
</dbReference>
<dbReference type="HPA" id="ENSG00000178386">
    <property type="expression patterns" value="Low tissue specificity"/>
</dbReference>
<dbReference type="neXtProt" id="NX_Q9UK11"/>
<dbReference type="OpenTargets" id="ENSG00000178386"/>
<dbReference type="PharmGKB" id="PA37595"/>
<dbReference type="VEuPathDB" id="HostDB:ENSG00000178386"/>
<dbReference type="eggNOG" id="KOG1721">
    <property type="taxonomic scope" value="Eukaryota"/>
</dbReference>
<dbReference type="GeneTree" id="ENSGT00940000164111"/>
<dbReference type="HOGENOM" id="CLU_002678_44_5_1"/>
<dbReference type="InParanoid" id="Q9UK11"/>
<dbReference type="OrthoDB" id="9411774at2759"/>
<dbReference type="PAN-GO" id="Q9UK11">
    <property type="GO annotations" value="4 GO annotations based on evolutionary models"/>
</dbReference>
<dbReference type="PhylomeDB" id="Q9UK11"/>
<dbReference type="TreeFam" id="TF341885"/>
<dbReference type="PathwayCommons" id="Q9UK11"/>
<dbReference type="Reactome" id="R-HSA-212436">
    <property type="pathway name" value="Generic Transcription Pathway"/>
</dbReference>
<dbReference type="SignaLink" id="Q9UK11"/>
<dbReference type="BioGRID-ORCS" id="7766">
    <property type="hits" value="13 hits in 1173 CRISPR screens"/>
</dbReference>
<dbReference type="ChiTaRS" id="ZNF223">
    <property type="organism name" value="human"/>
</dbReference>
<dbReference type="GenomeRNAi" id="7766"/>
<dbReference type="Pharos" id="Q9UK11">
    <property type="development level" value="Tdark"/>
</dbReference>
<dbReference type="PRO" id="PR:Q9UK11"/>
<dbReference type="Proteomes" id="UP000005640">
    <property type="component" value="Chromosome 19"/>
</dbReference>
<dbReference type="RNAct" id="Q9UK11">
    <property type="molecule type" value="protein"/>
</dbReference>
<dbReference type="Bgee" id="ENSG00000178386">
    <property type="expression patterns" value="Expressed in secondary oocyte and 112 other cell types or tissues"/>
</dbReference>
<dbReference type="ExpressionAtlas" id="Q9UK11">
    <property type="expression patterns" value="baseline and differential"/>
</dbReference>
<dbReference type="GO" id="GO:0005634">
    <property type="term" value="C:nucleus"/>
    <property type="evidence" value="ECO:0007669"/>
    <property type="project" value="UniProtKB-SubCell"/>
</dbReference>
<dbReference type="GO" id="GO:0003677">
    <property type="term" value="F:DNA binding"/>
    <property type="evidence" value="ECO:0000303"/>
    <property type="project" value="UniProtKB"/>
</dbReference>
<dbReference type="GO" id="GO:0003700">
    <property type="term" value="F:DNA-binding transcription factor activity"/>
    <property type="evidence" value="ECO:0000303"/>
    <property type="project" value="ARUK-UCL"/>
</dbReference>
<dbReference type="GO" id="GO:0008270">
    <property type="term" value="F:zinc ion binding"/>
    <property type="evidence" value="ECO:0007669"/>
    <property type="project" value="UniProtKB-KW"/>
</dbReference>
<dbReference type="CDD" id="cd07765">
    <property type="entry name" value="KRAB_A-box"/>
    <property type="match status" value="1"/>
</dbReference>
<dbReference type="FunFam" id="3.30.160.60:FF:003447">
    <property type="match status" value="1"/>
</dbReference>
<dbReference type="FunFam" id="3.30.160.60:FF:000709">
    <property type="entry name" value="GDNF-inducible zinc finger protein 1"/>
    <property type="match status" value="1"/>
</dbReference>
<dbReference type="FunFam" id="3.30.160.60:FF:001313">
    <property type="entry name" value="Zinc finger protein 155"/>
    <property type="match status" value="1"/>
</dbReference>
<dbReference type="FunFam" id="3.30.160.60:FF:001597">
    <property type="entry name" value="Zinc finger protein 222"/>
    <property type="match status" value="1"/>
</dbReference>
<dbReference type="FunFam" id="3.30.160.60:FF:001750">
    <property type="entry name" value="Zinc finger protein 222"/>
    <property type="match status" value="1"/>
</dbReference>
<dbReference type="FunFam" id="3.30.160.60:FF:002239">
    <property type="entry name" value="Zinc finger protein 226"/>
    <property type="match status" value="1"/>
</dbReference>
<dbReference type="FunFam" id="3.30.160.60:FF:002882">
    <property type="entry name" value="Zinc finger protein 461"/>
    <property type="match status" value="1"/>
</dbReference>
<dbReference type="FunFam" id="3.30.160.60:FF:002254">
    <property type="entry name" value="Zinc finger protein 540"/>
    <property type="match status" value="1"/>
</dbReference>
<dbReference type="FunFam" id="3.30.160.60:FF:000017">
    <property type="entry name" value="zinc finger protein 62 homolog"/>
    <property type="match status" value="1"/>
</dbReference>
<dbReference type="Gene3D" id="6.10.140.140">
    <property type="match status" value="1"/>
</dbReference>
<dbReference type="Gene3D" id="3.30.160.60">
    <property type="entry name" value="Classic Zinc Finger"/>
    <property type="match status" value="10"/>
</dbReference>
<dbReference type="InterPro" id="IPR001909">
    <property type="entry name" value="KRAB"/>
</dbReference>
<dbReference type="InterPro" id="IPR036051">
    <property type="entry name" value="KRAB_dom_sf"/>
</dbReference>
<dbReference type="InterPro" id="IPR036236">
    <property type="entry name" value="Znf_C2H2_sf"/>
</dbReference>
<dbReference type="InterPro" id="IPR013087">
    <property type="entry name" value="Znf_C2H2_type"/>
</dbReference>
<dbReference type="PANTHER" id="PTHR24393:SF15">
    <property type="entry name" value="IP01243P-RELATED"/>
    <property type="match status" value="1"/>
</dbReference>
<dbReference type="PANTHER" id="PTHR24393">
    <property type="entry name" value="ZINC FINGER PROTEIN"/>
    <property type="match status" value="1"/>
</dbReference>
<dbReference type="Pfam" id="PF01352">
    <property type="entry name" value="KRAB"/>
    <property type="match status" value="1"/>
</dbReference>
<dbReference type="Pfam" id="PF00096">
    <property type="entry name" value="zf-C2H2"/>
    <property type="match status" value="6"/>
</dbReference>
<dbReference type="SMART" id="SM00349">
    <property type="entry name" value="KRAB"/>
    <property type="match status" value="1"/>
</dbReference>
<dbReference type="SMART" id="SM00355">
    <property type="entry name" value="ZnF_C2H2"/>
    <property type="match status" value="9"/>
</dbReference>
<dbReference type="SUPFAM" id="SSF57667">
    <property type="entry name" value="beta-beta-alpha zinc fingers"/>
    <property type="match status" value="6"/>
</dbReference>
<dbReference type="SUPFAM" id="SSF109640">
    <property type="entry name" value="KRAB domain (Kruppel-associated box)"/>
    <property type="match status" value="1"/>
</dbReference>
<dbReference type="PROSITE" id="PS50805">
    <property type="entry name" value="KRAB"/>
    <property type="match status" value="1"/>
</dbReference>
<dbReference type="PROSITE" id="PS00028">
    <property type="entry name" value="ZINC_FINGER_C2H2_1"/>
    <property type="match status" value="8"/>
</dbReference>
<dbReference type="PROSITE" id="PS50157">
    <property type="entry name" value="ZINC_FINGER_C2H2_2"/>
    <property type="match status" value="10"/>
</dbReference>
<reference key="1">
    <citation type="journal article" date="2003" name="Genome Res.">
        <title>Differential expansion of zinc-finger transcription factor loci in homologous human and mouse gene clusters.</title>
        <authorList>
            <person name="Shannon M."/>
            <person name="Hamilton A.T."/>
            <person name="Gordon L."/>
            <person name="Branscomb E."/>
            <person name="Stubbs L."/>
        </authorList>
    </citation>
    <scope>NUCLEOTIDE SEQUENCE [MRNA]</scope>
    <scope>VARIANT ILE-138</scope>
</reference>
<reference key="2">
    <citation type="journal article" date="2004" name="Nat. Genet.">
        <title>Complete sequencing and characterization of 21,243 full-length human cDNAs.</title>
        <authorList>
            <person name="Ota T."/>
            <person name="Suzuki Y."/>
            <person name="Nishikawa T."/>
            <person name="Otsuki T."/>
            <person name="Sugiyama T."/>
            <person name="Irie R."/>
            <person name="Wakamatsu A."/>
            <person name="Hayashi K."/>
            <person name="Sato H."/>
            <person name="Nagai K."/>
            <person name="Kimura K."/>
            <person name="Makita H."/>
            <person name="Sekine M."/>
            <person name="Obayashi M."/>
            <person name="Nishi T."/>
            <person name="Shibahara T."/>
            <person name="Tanaka T."/>
            <person name="Ishii S."/>
            <person name="Yamamoto J."/>
            <person name="Saito K."/>
            <person name="Kawai Y."/>
            <person name="Isono Y."/>
            <person name="Nakamura Y."/>
            <person name="Nagahari K."/>
            <person name="Murakami K."/>
            <person name="Yasuda T."/>
            <person name="Iwayanagi T."/>
            <person name="Wagatsuma M."/>
            <person name="Shiratori A."/>
            <person name="Sudo H."/>
            <person name="Hosoiri T."/>
            <person name="Kaku Y."/>
            <person name="Kodaira H."/>
            <person name="Kondo H."/>
            <person name="Sugawara M."/>
            <person name="Takahashi M."/>
            <person name="Kanda K."/>
            <person name="Yokoi T."/>
            <person name="Furuya T."/>
            <person name="Kikkawa E."/>
            <person name="Omura Y."/>
            <person name="Abe K."/>
            <person name="Kamihara K."/>
            <person name="Katsuta N."/>
            <person name="Sato K."/>
            <person name="Tanikawa M."/>
            <person name="Yamazaki M."/>
            <person name="Ninomiya K."/>
            <person name="Ishibashi T."/>
            <person name="Yamashita H."/>
            <person name="Murakawa K."/>
            <person name="Fujimori K."/>
            <person name="Tanai H."/>
            <person name="Kimata M."/>
            <person name="Watanabe M."/>
            <person name="Hiraoka S."/>
            <person name="Chiba Y."/>
            <person name="Ishida S."/>
            <person name="Ono Y."/>
            <person name="Takiguchi S."/>
            <person name="Watanabe S."/>
            <person name="Yosida M."/>
            <person name="Hotuta T."/>
            <person name="Kusano J."/>
            <person name="Kanehori K."/>
            <person name="Takahashi-Fujii A."/>
            <person name="Hara H."/>
            <person name="Tanase T.-O."/>
            <person name="Nomura Y."/>
            <person name="Togiya S."/>
            <person name="Komai F."/>
            <person name="Hara R."/>
            <person name="Takeuchi K."/>
            <person name="Arita M."/>
            <person name="Imose N."/>
            <person name="Musashino K."/>
            <person name="Yuuki H."/>
            <person name="Oshima A."/>
            <person name="Sasaki N."/>
            <person name="Aotsuka S."/>
            <person name="Yoshikawa Y."/>
            <person name="Matsunawa H."/>
            <person name="Ichihara T."/>
            <person name="Shiohata N."/>
            <person name="Sano S."/>
            <person name="Moriya S."/>
            <person name="Momiyama H."/>
            <person name="Satoh N."/>
            <person name="Takami S."/>
            <person name="Terashima Y."/>
            <person name="Suzuki O."/>
            <person name="Nakagawa S."/>
            <person name="Senoh A."/>
            <person name="Mizoguchi H."/>
            <person name="Goto Y."/>
            <person name="Shimizu F."/>
            <person name="Wakebe H."/>
            <person name="Hishigaki H."/>
            <person name="Watanabe T."/>
            <person name="Sugiyama A."/>
            <person name="Takemoto M."/>
            <person name="Kawakami B."/>
            <person name="Yamazaki M."/>
            <person name="Watanabe K."/>
            <person name="Kumagai A."/>
            <person name="Itakura S."/>
            <person name="Fukuzumi Y."/>
            <person name="Fujimori Y."/>
            <person name="Komiyama M."/>
            <person name="Tashiro H."/>
            <person name="Tanigami A."/>
            <person name="Fujiwara T."/>
            <person name="Ono T."/>
            <person name="Yamada K."/>
            <person name="Fujii Y."/>
            <person name="Ozaki K."/>
            <person name="Hirao M."/>
            <person name="Ohmori Y."/>
            <person name="Kawabata A."/>
            <person name="Hikiji T."/>
            <person name="Kobatake N."/>
            <person name="Inagaki H."/>
            <person name="Ikema Y."/>
            <person name="Okamoto S."/>
            <person name="Okitani R."/>
            <person name="Kawakami T."/>
            <person name="Noguchi S."/>
            <person name="Itoh T."/>
            <person name="Shigeta K."/>
            <person name="Senba T."/>
            <person name="Matsumura K."/>
            <person name="Nakajima Y."/>
            <person name="Mizuno T."/>
            <person name="Morinaga M."/>
            <person name="Sasaki M."/>
            <person name="Togashi T."/>
            <person name="Oyama M."/>
            <person name="Hata H."/>
            <person name="Watanabe M."/>
            <person name="Komatsu T."/>
            <person name="Mizushima-Sugano J."/>
            <person name="Satoh T."/>
            <person name="Shirai Y."/>
            <person name="Takahashi Y."/>
            <person name="Nakagawa K."/>
            <person name="Okumura K."/>
            <person name="Nagase T."/>
            <person name="Nomura N."/>
            <person name="Kikuchi H."/>
            <person name="Masuho Y."/>
            <person name="Yamashita R."/>
            <person name="Nakai K."/>
            <person name="Yada T."/>
            <person name="Nakamura Y."/>
            <person name="Ohara O."/>
            <person name="Isogai T."/>
            <person name="Sugano S."/>
        </authorList>
    </citation>
    <scope>NUCLEOTIDE SEQUENCE [LARGE SCALE MRNA]</scope>
    <scope>VARIANT ILE-138</scope>
    <source>
        <tissue>Testis</tissue>
    </source>
</reference>
<reference key="3">
    <citation type="journal article" date="2004" name="Nature">
        <title>The DNA sequence and biology of human chromosome 19.</title>
        <authorList>
            <person name="Grimwood J."/>
            <person name="Gordon L.A."/>
            <person name="Olsen A.S."/>
            <person name="Terry A."/>
            <person name="Schmutz J."/>
            <person name="Lamerdin J.E."/>
            <person name="Hellsten U."/>
            <person name="Goodstein D."/>
            <person name="Couronne O."/>
            <person name="Tran-Gyamfi M."/>
            <person name="Aerts A."/>
            <person name="Altherr M."/>
            <person name="Ashworth L."/>
            <person name="Bajorek E."/>
            <person name="Black S."/>
            <person name="Branscomb E."/>
            <person name="Caenepeel S."/>
            <person name="Carrano A.V."/>
            <person name="Caoile C."/>
            <person name="Chan Y.M."/>
            <person name="Christensen M."/>
            <person name="Cleland C.A."/>
            <person name="Copeland A."/>
            <person name="Dalin E."/>
            <person name="Dehal P."/>
            <person name="Denys M."/>
            <person name="Detter J.C."/>
            <person name="Escobar J."/>
            <person name="Flowers D."/>
            <person name="Fotopulos D."/>
            <person name="Garcia C."/>
            <person name="Georgescu A.M."/>
            <person name="Glavina T."/>
            <person name="Gomez M."/>
            <person name="Gonzales E."/>
            <person name="Groza M."/>
            <person name="Hammon N."/>
            <person name="Hawkins T."/>
            <person name="Haydu L."/>
            <person name="Ho I."/>
            <person name="Huang W."/>
            <person name="Israni S."/>
            <person name="Jett J."/>
            <person name="Kadner K."/>
            <person name="Kimball H."/>
            <person name="Kobayashi A."/>
            <person name="Larionov V."/>
            <person name="Leem S.-H."/>
            <person name="Lopez F."/>
            <person name="Lou Y."/>
            <person name="Lowry S."/>
            <person name="Malfatti S."/>
            <person name="Martinez D."/>
            <person name="McCready P.M."/>
            <person name="Medina C."/>
            <person name="Morgan J."/>
            <person name="Nelson K."/>
            <person name="Nolan M."/>
            <person name="Ovcharenko I."/>
            <person name="Pitluck S."/>
            <person name="Pollard M."/>
            <person name="Popkie A.P."/>
            <person name="Predki P."/>
            <person name="Quan G."/>
            <person name="Ramirez L."/>
            <person name="Rash S."/>
            <person name="Retterer J."/>
            <person name="Rodriguez A."/>
            <person name="Rogers S."/>
            <person name="Salamov A."/>
            <person name="Salazar A."/>
            <person name="She X."/>
            <person name="Smith D."/>
            <person name="Slezak T."/>
            <person name="Solovyev V."/>
            <person name="Thayer N."/>
            <person name="Tice H."/>
            <person name="Tsai M."/>
            <person name="Ustaszewska A."/>
            <person name="Vo N."/>
            <person name="Wagner M."/>
            <person name="Wheeler J."/>
            <person name="Wu K."/>
            <person name="Xie G."/>
            <person name="Yang J."/>
            <person name="Dubchak I."/>
            <person name="Furey T.S."/>
            <person name="DeJong P."/>
            <person name="Dickson M."/>
            <person name="Gordon D."/>
            <person name="Eichler E.E."/>
            <person name="Pennacchio L.A."/>
            <person name="Richardson P."/>
            <person name="Stubbs L."/>
            <person name="Rokhsar D.S."/>
            <person name="Myers R.M."/>
            <person name="Rubin E.M."/>
            <person name="Lucas S.M."/>
        </authorList>
    </citation>
    <scope>NUCLEOTIDE SEQUENCE [LARGE SCALE GENOMIC DNA]</scope>
</reference>
<reference key="4">
    <citation type="journal article" date="2004" name="Genome Res.">
        <title>The status, quality, and expansion of the NIH full-length cDNA project: the Mammalian Gene Collection (MGC).</title>
        <authorList>
            <consortium name="The MGC Project Team"/>
        </authorList>
    </citation>
    <scope>NUCLEOTIDE SEQUENCE [LARGE SCALE MRNA]</scope>
    <scope>VARIANT ILE-138</scope>
    <source>
        <tissue>Brain</tissue>
    </source>
</reference>
<reference key="5">
    <citation type="journal article" date="1996" name="Genomics">
        <title>Comparative analysis of a conserved zinc finger gene cluster on human chromosome 19q and mouse chromosome 7.</title>
        <authorList>
            <person name="Shannon M."/>
            <person name="Ashworth L.K."/>
            <person name="Mucenski M.L."/>
            <person name="Lamerdin J.E."/>
            <person name="Branscomb E."/>
            <person name="Stubbs L."/>
        </authorList>
    </citation>
    <scope>NUCLEOTIDE SEQUENCE [GENOMIC DNA] OF 6-78</scope>
</reference>
<reference key="6">
    <citation type="submission" date="2001-12" db="EMBL/GenBank/DDBJ databases">
        <title>Sequence analysis of a 1Mb region in 19q13.2 containing a zinc finger gene cluster.</title>
        <authorList>
            <person name="Kodoyianni V."/>
            <person name="Ge Y."/>
            <person name="Krummel G.K."/>
            <person name="Kvikstad E."/>
            <person name="Severin J."/>
            <person name="Gordon L."/>
            <person name="Shannon M."/>
            <person name="Brower A."/>
            <person name="Olsen A.S."/>
            <person name="Smith L.M."/>
        </authorList>
    </citation>
    <scope>NUCLEOTIDE SEQUENCE [GENOMIC DNA] OF 82-482</scope>
</reference>
<proteinExistence type="evidence at protein level"/>